<proteinExistence type="evidence at protein level"/>
<feature type="chain" id="PRO_0000191285" description="Hyaluronidase">
    <location>
        <begin position="1"/>
        <end position="331"/>
    </location>
</feature>
<feature type="active site" description="Proton donor" evidence="1">
    <location>
        <position position="109"/>
    </location>
</feature>
<feature type="glycosylation site" description="N-linked (GlcNAc...) asparagine" evidence="2">
    <location>
        <position position="79"/>
    </location>
</feature>
<feature type="glycosylation site" description="N-linked (GlcNAc...) asparagine" evidence="2">
    <location>
        <position position="325"/>
    </location>
</feature>
<feature type="disulfide bond" evidence="1">
    <location>
        <begin position="19"/>
        <end position="308"/>
    </location>
</feature>
<feature type="disulfide bond" evidence="1">
    <location>
        <begin position="185"/>
        <end position="197"/>
    </location>
</feature>
<dbReference type="EC" id="3.2.1.35"/>
<dbReference type="EMBL" id="L34548">
    <property type="protein sequence ID" value="AAA68279.1"/>
    <property type="molecule type" value="mRNA"/>
</dbReference>
<dbReference type="PIR" id="A56090">
    <property type="entry name" value="A56090"/>
</dbReference>
<dbReference type="SMR" id="P49371"/>
<dbReference type="Allergome" id="3273">
    <property type="allergen name" value="Dol m 2.0101"/>
</dbReference>
<dbReference type="Allergome" id="329">
    <property type="allergen name" value="Dol m 2"/>
</dbReference>
<dbReference type="CAZy" id="GH56">
    <property type="family name" value="Glycoside Hydrolase Family 56"/>
</dbReference>
<dbReference type="GO" id="GO:0005576">
    <property type="term" value="C:extracellular region"/>
    <property type="evidence" value="ECO:0007669"/>
    <property type="project" value="UniProtKB-SubCell"/>
</dbReference>
<dbReference type="GO" id="GO:0004415">
    <property type="term" value="F:hyalurononglucosaminidase activity"/>
    <property type="evidence" value="ECO:0007669"/>
    <property type="project" value="UniProtKB-EC"/>
</dbReference>
<dbReference type="GO" id="GO:0005975">
    <property type="term" value="P:carbohydrate metabolic process"/>
    <property type="evidence" value="ECO:0007669"/>
    <property type="project" value="InterPro"/>
</dbReference>
<dbReference type="GO" id="GO:0006952">
    <property type="term" value="P:defense response"/>
    <property type="evidence" value="ECO:0007669"/>
    <property type="project" value="InterPro"/>
</dbReference>
<dbReference type="GO" id="GO:0030214">
    <property type="term" value="P:hyaluronan catabolic process"/>
    <property type="evidence" value="ECO:0007669"/>
    <property type="project" value="TreeGrafter"/>
</dbReference>
<dbReference type="FunFam" id="3.20.20.70:FF:000366">
    <property type="entry name" value="Hyaluronidase"/>
    <property type="match status" value="1"/>
</dbReference>
<dbReference type="Gene3D" id="3.20.20.70">
    <property type="entry name" value="Aldolase class I"/>
    <property type="match status" value="1"/>
</dbReference>
<dbReference type="InterPro" id="IPR013785">
    <property type="entry name" value="Aldolase_TIM"/>
</dbReference>
<dbReference type="InterPro" id="IPR017853">
    <property type="entry name" value="Glycoside_hydrolase_SF"/>
</dbReference>
<dbReference type="InterPro" id="IPR018155">
    <property type="entry name" value="Hyaluronidase"/>
</dbReference>
<dbReference type="InterPro" id="IPR001329">
    <property type="entry name" value="Venom_Hyaluronidase"/>
</dbReference>
<dbReference type="PANTHER" id="PTHR11769">
    <property type="entry name" value="HYALURONIDASE"/>
    <property type="match status" value="1"/>
</dbReference>
<dbReference type="PANTHER" id="PTHR11769:SF35">
    <property type="entry name" value="HYALURONIDASE"/>
    <property type="match status" value="1"/>
</dbReference>
<dbReference type="Pfam" id="PF01630">
    <property type="entry name" value="Glyco_hydro_56"/>
    <property type="match status" value="1"/>
</dbReference>
<dbReference type="PIRSF" id="PIRSF038193">
    <property type="entry name" value="Hyaluronidase"/>
    <property type="match status" value="1"/>
</dbReference>
<dbReference type="PRINTS" id="PR00846">
    <property type="entry name" value="GLHYDRLASE56"/>
</dbReference>
<dbReference type="PRINTS" id="PR00847">
    <property type="entry name" value="HYALURONDASE"/>
</dbReference>
<dbReference type="SUPFAM" id="SSF51445">
    <property type="entry name" value="(Trans)glycosidases"/>
    <property type="match status" value="1"/>
</dbReference>
<accession>P49371</accession>
<organism>
    <name type="scientific">Dolichovespula maculata</name>
    <name type="common">Bald-faced hornet</name>
    <name type="synonym">Vespula maculata</name>
    <dbReference type="NCBI Taxonomy" id="7441"/>
    <lineage>
        <taxon>Eukaryota</taxon>
        <taxon>Metazoa</taxon>
        <taxon>Ecdysozoa</taxon>
        <taxon>Arthropoda</taxon>
        <taxon>Hexapoda</taxon>
        <taxon>Insecta</taxon>
        <taxon>Pterygota</taxon>
        <taxon>Neoptera</taxon>
        <taxon>Endopterygota</taxon>
        <taxon>Hymenoptera</taxon>
        <taxon>Apocrita</taxon>
        <taxon>Aculeata</taxon>
        <taxon>Vespoidea</taxon>
        <taxon>Vespidae</taxon>
        <taxon>Vespinae</taxon>
        <taxon>Dolichovespula</taxon>
    </lineage>
</organism>
<sequence>SERPKRVFNIYWNVPTFMCHQYGLYFDEVTNFNIKHNSKDDFQGDKISIFYDPGEFPALLPLKEGNYKIRNGGVPQEGNITIHLQRFIENLDKTYPNRNFNGIGVIDFERWRPIFRQNWGNMMIHKKFSIDLVRNEHPFWDKKMIELEASKRFEKYARLFMEETLKLAKKTRKQADWGYYGYPYCFNMSPNNLVPDCDATAMLENDKMSWLFNNQNVLLPSVYIRHELTPDQRVGLVQGRVKEAVRISNNLKHSPKVLSYWWYVYQDDTNTFLTETDVKKTFQEIAINGGDGIIIWGSSSDVNSLSKCKRLREYLLTVLGPITVNVTETVN</sequence>
<evidence type="ECO:0000250" key="1"/>
<evidence type="ECO:0000255" key="2"/>
<evidence type="ECO:0000305" key="3"/>
<comment type="function">
    <text evidence="1">Hydrolyzes high molecular weight hyaluronic acid to produce small oligosaccharides.</text>
</comment>
<comment type="catalytic activity">
    <reaction>
        <text>Random hydrolysis of (1-&gt;4)-linkages between N-acetyl-beta-D-glucosamine and D-glucuronate residues in hyaluronate.</text>
        <dbReference type="EC" id="3.2.1.35"/>
    </reaction>
</comment>
<comment type="subcellular location">
    <subcellularLocation>
        <location>Secreted</location>
    </subcellularLocation>
</comment>
<comment type="tissue specificity">
    <text>Expressed by the venom gland.</text>
</comment>
<comment type="allergen">
    <text>Causes an allergic reaction in human.</text>
</comment>
<comment type="similarity">
    <text evidence="3">Belongs to the glycosyl hydrolase 56 family.</text>
</comment>
<keyword id="KW-0020">Allergen</keyword>
<keyword id="KW-0903">Direct protein sequencing</keyword>
<keyword id="KW-1015">Disulfide bond</keyword>
<keyword id="KW-0325">Glycoprotein</keyword>
<keyword id="KW-0326">Glycosidase</keyword>
<keyword id="KW-0378">Hydrolase</keyword>
<keyword id="KW-0964">Secreted</keyword>
<protein>
    <recommendedName>
        <fullName>Hyaluronidase</fullName>
        <shortName>Hya</shortName>
        <ecNumber>3.2.1.35</ecNumber>
    </recommendedName>
    <alternativeName>
        <fullName>Allergen Dol m II</fullName>
    </alternativeName>
    <alternativeName>
        <fullName>Hyaluronoglucosaminidase</fullName>
    </alternativeName>
    <allergenName>Dol m 2</allergenName>
</protein>
<reference key="1">
    <citation type="journal article" date="1995" name="J. Biol. Chem.">
        <title>Sequence identity and antigenic cross-reactivity of white face hornet venom allergen, also a hyaluronidase, with other proteins.</title>
        <authorList>
            <person name="Lu G."/>
            <person name="Kochoumian L."/>
            <person name="King T.P."/>
        </authorList>
    </citation>
    <scope>NUCLEOTIDE SEQUENCE [MRNA]</scope>
    <scope>PROTEIN SEQUENCE OF 1-45</scope>
    <source>
        <tissue>Venom</tissue>
        <tissue>Venom gland</tissue>
    </source>
</reference>
<name>HUGA_DOLMA</name>